<dbReference type="EC" id="2.3.1.129" evidence="1"/>
<dbReference type="EMBL" id="CP001063">
    <property type="protein sequence ID" value="ACD06729.1"/>
    <property type="molecule type" value="Genomic_DNA"/>
</dbReference>
<dbReference type="RefSeq" id="WP_000565978.1">
    <property type="nucleotide sequence ID" value="NC_010658.1"/>
</dbReference>
<dbReference type="SMR" id="B2U324"/>
<dbReference type="STRING" id="344609.SbBS512_E0174"/>
<dbReference type="KEGG" id="sbc:SbBS512_E0174"/>
<dbReference type="HOGENOM" id="CLU_061249_0_0_6"/>
<dbReference type="UniPathway" id="UPA00359">
    <property type="reaction ID" value="UER00477"/>
</dbReference>
<dbReference type="Proteomes" id="UP000001030">
    <property type="component" value="Chromosome"/>
</dbReference>
<dbReference type="GO" id="GO:0005737">
    <property type="term" value="C:cytoplasm"/>
    <property type="evidence" value="ECO:0007669"/>
    <property type="project" value="UniProtKB-SubCell"/>
</dbReference>
<dbReference type="GO" id="GO:0016020">
    <property type="term" value="C:membrane"/>
    <property type="evidence" value="ECO:0007669"/>
    <property type="project" value="GOC"/>
</dbReference>
<dbReference type="GO" id="GO:0008780">
    <property type="term" value="F:acyl-[acyl-carrier-protein]-UDP-N-acetylglucosamine O-acyltransferase activity"/>
    <property type="evidence" value="ECO:0007669"/>
    <property type="project" value="UniProtKB-UniRule"/>
</dbReference>
<dbReference type="GO" id="GO:0009245">
    <property type="term" value="P:lipid A biosynthetic process"/>
    <property type="evidence" value="ECO:0007669"/>
    <property type="project" value="UniProtKB-UniRule"/>
</dbReference>
<dbReference type="CDD" id="cd03351">
    <property type="entry name" value="LbH_UDP-GlcNAc_AT"/>
    <property type="match status" value="1"/>
</dbReference>
<dbReference type="FunFam" id="1.20.1180.10:FF:000001">
    <property type="entry name" value="Acyl-[acyl-carrier-protein]--UDP-N-acetylglucosamine O-acyltransferase"/>
    <property type="match status" value="1"/>
</dbReference>
<dbReference type="FunFam" id="2.160.10.10:FF:000003">
    <property type="entry name" value="Acyl-[acyl-carrier-protein]--UDP-N-acetylglucosamine O-acyltransferase"/>
    <property type="match status" value="1"/>
</dbReference>
<dbReference type="Gene3D" id="2.160.10.10">
    <property type="entry name" value="Hexapeptide repeat proteins"/>
    <property type="match status" value="1"/>
</dbReference>
<dbReference type="Gene3D" id="1.20.1180.10">
    <property type="entry name" value="Udp N-acetylglucosamine O-acyltransferase, C-terminal domain"/>
    <property type="match status" value="1"/>
</dbReference>
<dbReference type="HAMAP" id="MF_00387">
    <property type="entry name" value="LpxA"/>
    <property type="match status" value="1"/>
</dbReference>
<dbReference type="InterPro" id="IPR029098">
    <property type="entry name" value="Acetyltransf_C"/>
</dbReference>
<dbReference type="InterPro" id="IPR037157">
    <property type="entry name" value="Acetyltransf_C_sf"/>
</dbReference>
<dbReference type="InterPro" id="IPR001451">
    <property type="entry name" value="Hexapep"/>
</dbReference>
<dbReference type="InterPro" id="IPR018357">
    <property type="entry name" value="Hexapep_transf_CS"/>
</dbReference>
<dbReference type="InterPro" id="IPR010137">
    <property type="entry name" value="Lipid_A_LpxA"/>
</dbReference>
<dbReference type="InterPro" id="IPR011004">
    <property type="entry name" value="Trimer_LpxA-like_sf"/>
</dbReference>
<dbReference type="NCBIfam" id="TIGR01852">
    <property type="entry name" value="lipid_A_lpxA"/>
    <property type="match status" value="1"/>
</dbReference>
<dbReference type="NCBIfam" id="NF003657">
    <property type="entry name" value="PRK05289.1"/>
    <property type="match status" value="1"/>
</dbReference>
<dbReference type="PANTHER" id="PTHR43480">
    <property type="entry name" value="ACYL-[ACYL-CARRIER-PROTEIN]--UDP-N-ACETYLGLUCOSAMINE O-ACYLTRANSFERASE"/>
    <property type="match status" value="1"/>
</dbReference>
<dbReference type="PANTHER" id="PTHR43480:SF1">
    <property type="entry name" value="ACYL-[ACYL-CARRIER-PROTEIN]--UDP-N-ACETYLGLUCOSAMINE O-ACYLTRANSFERASE, MITOCHONDRIAL-RELATED"/>
    <property type="match status" value="1"/>
</dbReference>
<dbReference type="Pfam" id="PF13720">
    <property type="entry name" value="Acetyltransf_11"/>
    <property type="match status" value="1"/>
</dbReference>
<dbReference type="Pfam" id="PF00132">
    <property type="entry name" value="Hexapep"/>
    <property type="match status" value="2"/>
</dbReference>
<dbReference type="PIRSF" id="PIRSF000456">
    <property type="entry name" value="UDP-GlcNAc_acltr"/>
    <property type="match status" value="1"/>
</dbReference>
<dbReference type="SUPFAM" id="SSF51161">
    <property type="entry name" value="Trimeric LpxA-like enzymes"/>
    <property type="match status" value="1"/>
</dbReference>
<dbReference type="PROSITE" id="PS00101">
    <property type="entry name" value="HEXAPEP_TRANSFERASES"/>
    <property type="match status" value="2"/>
</dbReference>
<name>LPXA_SHIB3</name>
<feature type="chain" id="PRO_1000122733" description="Acyl-[acyl-carrier-protein]--UDP-N-acetylglucosamine O-acyltransferase">
    <location>
        <begin position="1"/>
        <end position="262"/>
    </location>
</feature>
<organism>
    <name type="scientific">Shigella boydii serotype 18 (strain CDC 3083-94 / BS512)</name>
    <dbReference type="NCBI Taxonomy" id="344609"/>
    <lineage>
        <taxon>Bacteria</taxon>
        <taxon>Pseudomonadati</taxon>
        <taxon>Pseudomonadota</taxon>
        <taxon>Gammaproteobacteria</taxon>
        <taxon>Enterobacterales</taxon>
        <taxon>Enterobacteriaceae</taxon>
        <taxon>Shigella</taxon>
    </lineage>
</organism>
<evidence type="ECO:0000255" key="1">
    <source>
        <dbReference type="HAMAP-Rule" id="MF_00387"/>
    </source>
</evidence>
<protein>
    <recommendedName>
        <fullName evidence="1">Acyl-[acyl-carrier-protein]--UDP-N-acetylglucosamine O-acyltransferase</fullName>
        <shortName evidence="1">UDP-N-acetylglucosamine acyltransferase</shortName>
        <ecNumber evidence="1">2.3.1.129</ecNumber>
    </recommendedName>
</protein>
<reference key="1">
    <citation type="submission" date="2008-05" db="EMBL/GenBank/DDBJ databases">
        <title>Complete sequence of Shigella boydii serotype 18 strain BS512.</title>
        <authorList>
            <person name="Rasko D.A."/>
            <person name="Rosovitz M."/>
            <person name="Maurelli A.T."/>
            <person name="Myers G."/>
            <person name="Seshadri R."/>
            <person name="Cer R."/>
            <person name="Jiang L."/>
            <person name="Ravel J."/>
            <person name="Sebastian Y."/>
        </authorList>
    </citation>
    <scope>NUCLEOTIDE SEQUENCE [LARGE SCALE GENOMIC DNA]</scope>
    <source>
        <strain>CDC 3083-94 / BS512</strain>
    </source>
</reference>
<comment type="function">
    <text evidence="1">Involved in the biosynthesis of lipid A, a phosphorylated glycolipid that anchors the lipopolysaccharide to the outer membrane of the cell.</text>
</comment>
<comment type="catalytic activity">
    <reaction evidence="1">
        <text>a (3R)-hydroxyacyl-[ACP] + UDP-N-acetyl-alpha-D-glucosamine = a UDP-3-O-[(3R)-3-hydroxyacyl]-N-acetyl-alpha-D-glucosamine + holo-[ACP]</text>
        <dbReference type="Rhea" id="RHEA:67812"/>
        <dbReference type="Rhea" id="RHEA-COMP:9685"/>
        <dbReference type="Rhea" id="RHEA-COMP:9945"/>
        <dbReference type="ChEBI" id="CHEBI:57705"/>
        <dbReference type="ChEBI" id="CHEBI:64479"/>
        <dbReference type="ChEBI" id="CHEBI:78827"/>
        <dbReference type="ChEBI" id="CHEBI:173225"/>
        <dbReference type="EC" id="2.3.1.129"/>
    </reaction>
</comment>
<comment type="pathway">
    <text evidence="1">Glycolipid biosynthesis; lipid IV(A) biosynthesis; lipid IV(A) from (3R)-3-hydroxytetradecanoyl-[acyl-carrier-protein] and UDP-N-acetyl-alpha-D-glucosamine: step 1/6.</text>
</comment>
<comment type="subunit">
    <text evidence="1">Homotrimer.</text>
</comment>
<comment type="subcellular location">
    <subcellularLocation>
        <location evidence="1">Cytoplasm</location>
    </subcellularLocation>
</comment>
<comment type="similarity">
    <text evidence="1">Belongs to the transferase hexapeptide repeat family. LpxA subfamily.</text>
</comment>
<gene>
    <name evidence="1" type="primary">lpxA</name>
    <name type="ordered locus">SbBS512_E0174</name>
</gene>
<proteinExistence type="inferred from homology"/>
<accession>B2U324</accession>
<sequence length="262" mass="28024">MIDKSAFVHPTAIVEEGASIGANAHIGPFCIVGPHVGIGEGTVLKSHVVVNGHTKIGRDNEIYQFASIGEVNQDLKYAGEPTRVEIGDRNRIRESVTIHRGTVQGGGLTKVGSDNLLMINAHIAHDCTVGNRCILANNATLAGHVSVDDFAIIGGMTAVHQFCIIGAHVMVGGCSGVAQDVPPYVIAQGNHATPFGVNIEGLKRRGFSREAITAIRNAYKLIYRSGKTLDEVKPEIAELAETYPEVKAFTDFFSRSTRGLIR</sequence>
<keyword id="KW-0012">Acyltransferase</keyword>
<keyword id="KW-0963">Cytoplasm</keyword>
<keyword id="KW-0441">Lipid A biosynthesis</keyword>
<keyword id="KW-0444">Lipid biosynthesis</keyword>
<keyword id="KW-0443">Lipid metabolism</keyword>
<keyword id="KW-1185">Reference proteome</keyword>
<keyword id="KW-0677">Repeat</keyword>
<keyword id="KW-0808">Transferase</keyword>